<name>AMPP_ECOLI</name>
<feature type="initiator methionine" description="Removed" evidence="1">
    <location>
        <position position="1"/>
    </location>
</feature>
<feature type="chain" id="PRO_0000185075" description="Xaa-Pro aminopeptidase">
    <location>
        <begin position="2"/>
        <end position="441"/>
    </location>
</feature>
<feature type="binding site">
    <location>
        <position position="261"/>
    </location>
    <ligand>
        <name>Mn(2+)</name>
        <dbReference type="ChEBI" id="CHEBI:29035"/>
        <label>2</label>
    </ligand>
</feature>
<feature type="binding site">
    <location>
        <position position="272"/>
    </location>
    <ligand>
        <name>Mn(2+)</name>
        <dbReference type="ChEBI" id="CHEBI:29035"/>
        <label>1</label>
    </ligand>
</feature>
<feature type="binding site">
    <location>
        <position position="272"/>
    </location>
    <ligand>
        <name>Mn(2+)</name>
        <dbReference type="ChEBI" id="CHEBI:29035"/>
        <label>2</label>
    </ligand>
</feature>
<feature type="binding site">
    <location>
        <position position="355"/>
    </location>
    <ligand>
        <name>Mn(2+)</name>
        <dbReference type="ChEBI" id="CHEBI:29035"/>
        <label>1</label>
    </ligand>
</feature>
<feature type="binding site">
    <location>
        <position position="384"/>
    </location>
    <ligand>
        <name>Mn(2+)</name>
        <dbReference type="ChEBI" id="CHEBI:29035"/>
        <label>1</label>
    </ligand>
</feature>
<feature type="binding site">
    <location>
        <position position="407"/>
    </location>
    <ligand>
        <name>Mn(2+)</name>
        <dbReference type="ChEBI" id="CHEBI:29035"/>
        <label>1</label>
    </ligand>
</feature>
<feature type="binding site">
    <location>
        <position position="407"/>
    </location>
    <ligand>
        <name>Mn(2+)</name>
        <dbReference type="ChEBI" id="CHEBI:29035"/>
        <label>2</label>
    </ligand>
</feature>
<feature type="helix" evidence="3">
    <location>
        <begin position="6"/>
        <end position="19"/>
    </location>
</feature>
<feature type="strand" evidence="3">
    <location>
        <begin position="22"/>
        <end position="29"/>
    </location>
</feature>
<feature type="strand" evidence="3">
    <location>
        <begin position="35"/>
        <end position="37"/>
    </location>
</feature>
<feature type="helix" evidence="3">
    <location>
        <begin position="48"/>
        <end position="54"/>
    </location>
</feature>
<feature type="strand" evidence="3">
    <location>
        <begin position="62"/>
        <end position="67"/>
    </location>
</feature>
<feature type="strand" evidence="3">
    <location>
        <begin position="69"/>
        <end position="71"/>
    </location>
</feature>
<feature type="strand" evidence="3">
    <location>
        <begin position="73"/>
        <end position="79"/>
    </location>
</feature>
<feature type="helix" evidence="3">
    <location>
        <begin position="84"/>
        <end position="90"/>
    </location>
</feature>
<feature type="helix" evidence="3">
    <location>
        <begin position="95"/>
        <end position="103"/>
    </location>
</feature>
<feature type="strand" evidence="3">
    <location>
        <begin position="106"/>
        <end position="110"/>
    </location>
</feature>
<feature type="helix" evidence="3">
    <location>
        <begin position="111"/>
        <end position="113"/>
    </location>
</feature>
<feature type="helix" evidence="3">
    <location>
        <begin position="114"/>
        <end position="122"/>
    </location>
</feature>
<feature type="strand" evidence="3">
    <location>
        <begin position="126"/>
        <end position="129"/>
    </location>
</feature>
<feature type="helix" evidence="3">
    <location>
        <begin position="136"/>
        <end position="150"/>
    </location>
</feature>
<feature type="helix" evidence="3">
    <location>
        <begin position="153"/>
        <end position="155"/>
    </location>
</feature>
<feature type="strand" evidence="3">
    <location>
        <begin position="161"/>
        <end position="164"/>
    </location>
</feature>
<feature type="helix" evidence="3">
    <location>
        <begin position="167"/>
        <end position="175"/>
    </location>
</feature>
<feature type="helix" evidence="3">
    <location>
        <begin position="179"/>
        <end position="202"/>
    </location>
</feature>
<feature type="helix" evidence="3">
    <location>
        <begin position="209"/>
        <end position="222"/>
    </location>
</feature>
<feature type="strand" evidence="3">
    <location>
        <begin position="227"/>
        <end position="230"/>
    </location>
</feature>
<feature type="strand" evidence="3">
    <location>
        <begin position="233"/>
        <end position="236"/>
    </location>
</feature>
<feature type="helix" evidence="3">
    <location>
        <begin position="237"/>
        <end position="241"/>
    </location>
</feature>
<feature type="strand" evidence="3">
    <location>
        <begin position="257"/>
        <end position="262"/>
    </location>
</feature>
<feature type="strand" evidence="3">
    <location>
        <begin position="264"/>
        <end position="266"/>
    </location>
</feature>
<feature type="strand" evidence="3">
    <location>
        <begin position="273"/>
        <end position="278"/>
    </location>
</feature>
<feature type="helix" evidence="3">
    <location>
        <begin position="285"/>
        <end position="304"/>
    </location>
</feature>
<feature type="helix" evidence="3">
    <location>
        <begin position="311"/>
        <end position="328"/>
    </location>
</feature>
<feature type="helix" evidence="3">
    <location>
        <begin position="336"/>
        <end position="341"/>
    </location>
</feature>
<feature type="turn" evidence="3">
    <location>
        <begin position="342"/>
        <end position="348"/>
    </location>
</feature>
<feature type="strand" evidence="3">
    <location>
        <begin position="358"/>
        <end position="362"/>
    </location>
</feature>
<feature type="helix" evidence="3">
    <location>
        <begin position="369"/>
        <end position="371"/>
    </location>
</feature>
<feature type="strand" evidence="3">
    <location>
        <begin position="380"/>
        <end position="383"/>
    </location>
</feature>
<feature type="strand" evidence="3">
    <location>
        <begin position="386"/>
        <end position="389"/>
    </location>
</feature>
<feature type="helix" evidence="3">
    <location>
        <begin position="397"/>
        <end position="399"/>
    </location>
</feature>
<feature type="strand" evidence="3">
    <location>
        <begin position="402"/>
        <end position="405"/>
    </location>
</feature>
<feature type="strand" evidence="3">
    <location>
        <begin position="407"/>
        <end position="413"/>
    </location>
</feature>
<feature type="strand" evidence="3">
    <location>
        <begin position="416"/>
        <end position="421"/>
    </location>
</feature>
<feature type="helix" evidence="3">
    <location>
        <begin position="428"/>
        <end position="439"/>
    </location>
</feature>
<organism>
    <name type="scientific">Escherichia coli (strain K12)</name>
    <dbReference type="NCBI Taxonomy" id="83333"/>
    <lineage>
        <taxon>Bacteria</taxon>
        <taxon>Pseudomonadati</taxon>
        <taxon>Pseudomonadota</taxon>
        <taxon>Gammaproteobacteria</taxon>
        <taxon>Enterobacterales</taxon>
        <taxon>Enterobacteriaceae</taxon>
        <taxon>Escherichia</taxon>
    </lineage>
</organism>
<reference key="1">
    <citation type="journal article" date="1989" name="J. Biochem.">
        <title>Sequencing and high expression of aminopeptidase P gene from Escherichia coli HB101.</title>
        <authorList>
            <person name="Yoshimoto T."/>
            <person name="Tone H."/>
            <person name="Honda T."/>
            <person name="Osatomi K."/>
            <person name="Kobayashi R."/>
            <person name="Tsuru D."/>
        </authorList>
    </citation>
    <scope>NUCLEOTIDE SEQUENCE [GENOMIC DNA]</scope>
    <scope>PROTEIN SEQUENCE OF 2-21</scope>
    <scope>CHARACTERIZATION</scope>
    <source>
        <strain>ATCC 33694 / HB101</strain>
    </source>
</reference>
<reference key="2">
    <citation type="journal article" date="1992" name="J. Bacteriol.">
        <title>Isolation and characterization of a light-sensitive mutant of Escherichia coli K-12 with a mutation in a gene that is required for the biosynthesis of ubiquinone.</title>
        <authorList>
            <person name="Nakahigashi K."/>
            <person name="Miyamoto K."/>
            <person name="Nishimura K."/>
            <person name="Inokuchi H."/>
        </authorList>
    </citation>
    <scope>NUCLEOTIDE SEQUENCE [GENOMIC DNA]</scope>
    <source>
        <strain>ATCC 33694 / HB101</strain>
    </source>
</reference>
<reference key="3">
    <citation type="journal article" date="1997" name="Science">
        <title>The complete genome sequence of Escherichia coli K-12.</title>
        <authorList>
            <person name="Blattner F.R."/>
            <person name="Plunkett G. III"/>
            <person name="Bloch C.A."/>
            <person name="Perna N.T."/>
            <person name="Burland V."/>
            <person name="Riley M."/>
            <person name="Collado-Vides J."/>
            <person name="Glasner J.D."/>
            <person name="Rode C.K."/>
            <person name="Mayhew G.F."/>
            <person name="Gregor J."/>
            <person name="Davis N.W."/>
            <person name="Kirkpatrick H.A."/>
            <person name="Goeden M.A."/>
            <person name="Rose D.J."/>
            <person name="Mau B."/>
            <person name="Shao Y."/>
        </authorList>
    </citation>
    <scope>NUCLEOTIDE SEQUENCE [LARGE SCALE GENOMIC DNA]</scope>
    <source>
        <strain>K12 / MG1655 / ATCC 47076</strain>
    </source>
</reference>
<reference key="4">
    <citation type="journal article" date="2006" name="Mol. Syst. Biol.">
        <title>Highly accurate genome sequences of Escherichia coli K-12 strains MG1655 and W3110.</title>
        <authorList>
            <person name="Hayashi K."/>
            <person name="Morooka N."/>
            <person name="Yamamoto Y."/>
            <person name="Fujita K."/>
            <person name="Isono K."/>
            <person name="Choi S."/>
            <person name="Ohtsubo E."/>
            <person name="Baba T."/>
            <person name="Wanner B.L."/>
            <person name="Mori H."/>
            <person name="Horiuchi T."/>
        </authorList>
    </citation>
    <scope>NUCLEOTIDE SEQUENCE [LARGE SCALE GENOMIC DNA]</scope>
    <source>
        <strain>K12 / W3110 / ATCC 27325 / DSM 5911</strain>
    </source>
</reference>
<reference key="5">
    <citation type="journal article" date="1998" name="Proc. Natl. Acad. Sci. U.S.A.">
        <title>Structure and mechanism of a proline-specific aminopeptidase from Escherichia coli.</title>
        <authorList>
            <person name="Wilce M.C.J."/>
            <person name="Bond C.S."/>
            <person name="Dixon N.E."/>
            <person name="Freeman H.C."/>
            <person name="Guss J.M."/>
            <person name="Lilley P.E."/>
            <person name="Wilce J.A."/>
        </authorList>
    </citation>
    <scope>X-RAY CRYSTALLOGRAPHY (2.0 ANGSTROMS)</scope>
</reference>
<comment type="catalytic activity">
    <reaction>
        <text>Release of any N-terminal amino acid, including proline, that is linked to proline, even from a dipeptide or tripeptide.</text>
        <dbReference type="EC" id="3.4.11.9"/>
    </reaction>
</comment>
<comment type="cofactor">
    <cofactor>
        <name>Mn(2+)</name>
        <dbReference type="ChEBI" id="CHEBI:29035"/>
    </cofactor>
    <text>Binds 2 manganese ions per subunit.</text>
</comment>
<comment type="subunit">
    <text>Homotetramer.</text>
</comment>
<comment type="interaction">
    <interactant intactId="EBI-554801">
        <id>P15034</id>
    </interactant>
    <interactant intactId="EBI-544491">
        <id>P60560</id>
        <label>guaC</label>
    </interactant>
    <organismsDiffer>false</organismsDiffer>
    <experiments>3</experiments>
</comment>
<comment type="interaction">
    <interactant intactId="EBI-554801">
        <id>P15034</id>
    </interactant>
    <interactant intactId="EBI-542419">
        <id>P15288</id>
        <label>pepD</label>
    </interactant>
    <organismsDiffer>false</organismsDiffer>
    <experiments>4</experiments>
</comment>
<comment type="subcellular location">
    <subcellularLocation>
        <location>Cytoplasm</location>
    </subcellularLocation>
</comment>
<comment type="similarity">
    <text evidence="2">Belongs to the peptidase M24B family.</text>
</comment>
<dbReference type="EC" id="3.4.11.9"/>
<dbReference type="EMBL" id="D00398">
    <property type="protein sequence ID" value="BAA00299.1"/>
    <property type="molecule type" value="Genomic_DNA"/>
</dbReference>
<dbReference type="EMBL" id="D90281">
    <property type="protein sequence ID" value="BAA14325.1"/>
    <property type="molecule type" value="Genomic_DNA"/>
</dbReference>
<dbReference type="EMBL" id="U28377">
    <property type="protein sequence ID" value="AAA69076.1"/>
    <property type="molecule type" value="Genomic_DNA"/>
</dbReference>
<dbReference type="EMBL" id="U00096">
    <property type="protein sequence ID" value="AAC75946.1"/>
    <property type="molecule type" value="Genomic_DNA"/>
</dbReference>
<dbReference type="EMBL" id="AP009048">
    <property type="protein sequence ID" value="BAE76973.1"/>
    <property type="molecule type" value="Genomic_DNA"/>
</dbReference>
<dbReference type="PIR" id="JX0067">
    <property type="entry name" value="DPECP"/>
</dbReference>
<dbReference type="RefSeq" id="NP_417384.1">
    <property type="nucleotide sequence ID" value="NC_000913.3"/>
</dbReference>
<dbReference type="RefSeq" id="WP_001290136.1">
    <property type="nucleotide sequence ID" value="NZ_LN832404.1"/>
</dbReference>
<dbReference type="PDB" id="1A16">
    <property type="method" value="X-ray"/>
    <property type="resolution" value="2.30 A"/>
    <property type="chains" value="A=2-441"/>
</dbReference>
<dbReference type="PDB" id="1JAW">
    <property type="method" value="X-ray"/>
    <property type="resolution" value="2.70 A"/>
    <property type="chains" value="A=2-441"/>
</dbReference>
<dbReference type="PDB" id="1M35">
    <property type="method" value="X-ray"/>
    <property type="resolution" value="2.40 A"/>
    <property type="chains" value="A/B/C/D/E/F=2-441"/>
</dbReference>
<dbReference type="PDB" id="1N51">
    <property type="method" value="X-ray"/>
    <property type="resolution" value="2.30 A"/>
    <property type="chains" value="A=2-441"/>
</dbReference>
<dbReference type="PDB" id="1W2M">
    <property type="method" value="X-ray"/>
    <property type="resolution" value="2.40 A"/>
    <property type="chains" value="A/B/C/D/E/F=2-441"/>
</dbReference>
<dbReference type="PDB" id="1W7V">
    <property type="method" value="X-ray"/>
    <property type="resolution" value="2.00 A"/>
    <property type="chains" value="A/B/C/D=2-441"/>
</dbReference>
<dbReference type="PDB" id="1WBQ">
    <property type="method" value="X-ray"/>
    <property type="resolution" value="2.30 A"/>
    <property type="chains" value="A/B/C/D=2-441"/>
</dbReference>
<dbReference type="PDB" id="1WL6">
    <property type="method" value="X-ray"/>
    <property type="resolution" value="2.00 A"/>
    <property type="chains" value="A=2-441"/>
</dbReference>
<dbReference type="PDB" id="1WL9">
    <property type="method" value="X-ray"/>
    <property type="resolution" value="1.90 A"/>
    <property type="chains" value="A=2-441"/>
</dbReference>
<dbReference type="PDB" id="1WLR">
    <property type="method" value="X-ray"/>
    <property type="resolution" value="2.10 A"/>
    <property type="chains" value="A=2-441"/>
</dbReference>
<dbReference type="PDB" id="2BH3">
    <property type="method" value="X-ray"/>
    <property type="resolution" value="2.40 A"/>
    <property type="chains" value="A=2-441"/>
</dbReference>
<dbReference type="PDB" id="2BHA">
    <property type="method" value="X-ray"/>
    <property type="resolution" value="2.40 A"/>
    <property type="chains" value="A=2-441"/>
</dbReference>
<dbReference type="PDB" id="2BHB">
    <property type="method" value="X-ray"/>
    <property type="resolution" value="2.41 A"/>
    <property type="chains" value="A=2-441"/>
</dbReference>
<dbReference type="PDB" id="2BHC">
    <property type="method" value="X-ray"/>
    <property type="resolution" value="2.40 A"/>
    <property type="chains" value="A=2-441"/>
</dbReference>
<dbReference type="PDB" id="2BHD">
    <property type="method" value="X-ray"/>
    <property type="resolution" value="2.50 A"/>
    <property type="chains" value="A=2-441"/>
</dbReference>
<dbReference type="PDB" id="2BN7">
    <property type="method" value="X-ray"/>
    <property type="resolution" value="2.40 A"/>
    <property type="chains" value="A=2-441"/>
</dbReference>
<dbReference type="PDB" id="2BWS">
    <property type="method" value="X-ray"/>
    <property type="resolution" value="1.75 A"/>
    <property type="chains" value="A=2-441"/>
</dbReference>
<dbReference type="PDB" id="2BWT">
    <property type="method" value="X-ray"/>
    <property type="resolution" value="2.90 A"/>
    <property type="chains" value="A=2-441"/>
</dbReference>
<dbReference type="PDB" id="2BWU">
    <property type="method" value="X-ray"/>
    <property type="resolution" value="2.20 A"/>
    <property type="chains" value="A=2-441"/>
</dbReference>
<dbReference type="PDB" id="2BWV">
    <property type="method" value="X-ray"/>
    <property type="resolution" value="1.70 A"/>
    <property type="chains" value="A=2-441"/>
</dbReference>
<dbReference type="PDB" id="2BWW">
    <property type="method" value="X-ray"/>
    <property type="resolution" value="2.61 A"/>
    <property type="chains" value="A=2-441"/>
</dbReference>
<dbReference type="PDB" id="2BWX">
    <property type="method" value="X-ray"/>
    <property type="resolution" value="1.70 A"/>
    <property type="chains" value="A=2-441"/>
</dbReference>
<dbReference type="PDB" id="2BWY">
    <property type="method" value="X-ray"/>
    <property type="resolution" value="2.40 A"/>
    <property type="chains" value="A=2-441"/>
</dbReference>
<dbReference type="PDB" id="2V3X">
    <property type="method" value="X-ray"/>
    <property type="resolution" value="1.70 A"/>
    <property type="chains" value="A=2-441"/>
</dbReference>
<dbReference type="PDB" id="2V3Y">
    <property type="method" value="X-ray"/>
    <property type="resolution" value="1.60 A"/>
    <property type="chains" value="A=2-441"/>
</dbReference>
<dbReference type="PDB" id="2V3Z">
    <property type="method" value="X-ray"/>
    <property type="resolution" value="1.56 A"/>
    <property type="chains" value="A=2-441"/>
</dbReference>
<dbReference type="PDBsum" id="1A16"/>
<dbReference type="PDBsum" id="1JAW"/>
<dbReference type="PDBsum" id="1M35"/>
<dbReference type="PDBsum" id="1N51"/>
<dbReference type="PDBsum" id="1W2M"/>
<dbReference type="PDBsum" id="1W7V"/>
<dbReference type="PDBsum" id="1WBQ"/>
<dbReference type="PDBsum" id="1WL6"/>
<dbReference type="PDBsum" id="1WL9"/>
<dbReference type="PDBsum" id="1WLR"/>
<dbReference type="PDBsum" id="2BH3"/>
<dbReference type="PDBsum" id="2BHA"/>
<dbReference type="PDBsum" id="2BHB"/>
<dbReference type="PDBsum" id="2BHC"/>
<dbReference type="PDBsum" id="2BHD"/>
<dbReference type="PDBsum" id="2BN7"/>
<dbReference type="PDBsum" id="2BWS"/>
<dbReference type="PDBsum" id="2BWT"/>
<dbReference type="PDBsum" id="2BWU"/>
<dbReference type="PDBsum" id="2BWV"/>
<dbReference type="PDBsum" id="2BWW"/>
<dbReference type="PDBsum" id="2BWX"/>
<dbReference type="PDBsum" id="2BWY"/>
<dbReference type="PDBsum" id="2V3X"/>
<dbReference type="PDBsum" id="2V3Y"/>
<dbReference type="PDBsum" id="2V3Z"/>
<dbReference type="SMR" id="P15034"/>
<dbReference type="BioGRID" id="4259236">
    <property type="interactions" value="55"/>
</dbReference>
<dbReference type="DIP" id="DIP-10459N"/>
<dbReference type="FunCoup" id="P15034">
    <property type="interactions" value="593"/>
</dbReference>
<dbReference type="IntAct" id="P15034">
    <property type="interactions" value="10"/>
</dbReference>
<dbReference type="STRING" id="511145.b2908"/>
<dbReference type="DrugBank" id="DB04092">
    <property type="generic name" value="Apstatin"/>
</dbReference>
<dbReference type="MEROPS" id="M24.004"/>
<dbReference type="jPOST" id="P15034"/>
<dbReference type="PaxDb" id="511145-b2908"/>
<dbReference type="EnsemblBacteria" id="AAC75946">
    <property type="protein sequence ID" value="AAC75946"/>
    <property type="gene ID" value="b2908"/>
</dbReference>
<dbReference type="GeneID" id="947385"/>
<dbReference type="KEGG" id="ecj:JW2876"/>
<dbReference type="KEGG" id="eco:b2908"/>
<dbReference type="KEGG" id="ecoc:C3026_15940"/>
<dbReference type="PATRIC" id="fig|1411691.4.peg.3824"/>
<dbReference type="EchoBASE" id="EB0691"/>
<dbReference type="eggNOG" id="COG0006">
    <property type="taxonomic scope" value="Bacteria"/>
</dbReference>
<dbReference type="HOGENOM" id="CLU_017266_1_0_6"/>
<dbReference type="InParanoid" id="P15034"/>
<dbReference type="OMA" id="DSYFWYL"/>
<dbReference type="OrthoDB" id="9806388at2"/>
<dbReference type="PhylomeDB" id="P15034"/>
<dbReference type="BioCyc" id="EcoCyc:EG10697-MONOMER"/>
<dbReference type="BioCyc" id="MetaCyc:EG10697-MONOMER"/>
<dbReference type="BRENDA" id="3.1.8.1">
    <property type="organism ID" value="2026"/>
</dbReference>
<dbReference type="BRENDA" id="3.4.11.9">
    <property type="organism ID" value="2026"/>
</dbReference>
<dbReference type="EvolutionaryTrace" id="P15034"/>
<dbReference type="PRO" id="PR:P15034"/>
<dbReference type="Proteomes" id="UP000000625">
    <property type="component" value="Chromosome"/>
</dbReference>
<dbReference type="GO" id="GO:0005829">
    <property type="term" value="C:cytosol"/>
    <property type="evidence" value="ECO:0000314"/>
    <property type="project" value="EcoCyc"/>
</dbReference>
<dbReference type="GO" id="GO:0032991">
    <property type="term" value="C:protein-containing complex"/>
    <property type="evidence" value="ECO:0000314"/>
    <property type="project" value="EcoCyc"/>
</dbReference>
<dbReference type="GO" id="GO:0004177">
    <property type="term" value="F:aminopeptidase activity"/>
    <property type="evidence" value="ECO:0000314"/>
    <property type="project" value="EcoCyc"/>
</dbReference>
<dbReference type="GO" id="GO:0042802">
    <property type="term" value="F:identical protein binding"/>
    <property type="evidence" value="ECO:0000353"/>
    <property type="project" value="EcoCyc"/>
</dbReference>
<dbReference type="GO" id="GO:0030145">
    <property type="term" value="F:manganese ion binding"/>
    <property type="evidence" value="ECO:0000314"/>
    <property type="project" value="EcoCyc"/>
</dbReference>
<dbReference type="GO" id="GO:0070006">
    <property type="term" value="F:metalloaminopeptidase activity"/>
    <property type="evidence" value="ECO:0007669"/>
    <property type="project" value="InterPro"/>
</dbReference>
<dbReference type="GO" id="GO:0008235">
    <property type="term" value="F:metalloexopeptidase activity"/>
    <property type="evidence" value="ECO:0000314"/>
    <property type="project" value="EcoCyc"/>
</dbReference>
<dbReference type="GO" id="GO:0051289">
    <property type="term" value="P:protein homotetramerization"/>
    <property type="evidence" value="ECO:0000314"/>
    <property type="project" value="EcoCyc"/>
</dbReference>
<dbReference type="GO" id="GO:0006508">
    <property type="term" value="P:proteolysis"/>
    <property type="evidence" value="ECO:0000318"/>
    <property type="project" value="GO_Central"/>
</dbReference>
<dbReference type="CDD" id="cd01087">
    <property type="entry name" value="Prolidase"/>
    <property type="match status" value="1"/>
</dbReference>
<dbReference type="FunFam" id="3.40.350.10:FF:000012">
    <property type="entry name" value="Xaa-Pro aminopeptidase"/>
    <property type="match status" value="1"/>
</dbReference>
<dbReference type="FunFam" id="3.90.230.10:FF:000002">
    <property type="entry name" value="Xaa-Pro aminopeptidase 3"/>
    <property type="match status" value="1"/>
</dbReference>
<dbReference type="Gene3D" id="3.90.230.10">
    <property type="entry name" value="Creatinase/methionine aminopeptidase superfamily"/>
    <property type="match status" value="1"/>
</dbReference>
<dbReference type="Gene3D" id="3.40.350.10">
    <property type="entry name" value="Creatinase/prolidase N-terminal domain"/>
    <property type="match status" value="1"/>
</dbReference>
<dbReference type="InterPro" id="IPR007865">
    <property type="entry name" value="Aminopep_P_N"/>
</dbReference>
<dbReference type="InterPro" id="IPR029149">
    <property type="entry name" value="Creatin/AminoP/Spt16_N"/>
</dbReference>
<dbReference type="InterPro" id="IPR036005">
    <property type="entry name" value="Creatinase/aminopeptidase-like"/>
</dbReference>
<dbReference type="InterPro" id="IPR000994">
    <property type="entry name" value="Pept_M24"/>
</dbReference>
<dbReference type="InterPro" id="IPR001714">
    <property type="entry name" value="Pept_M24_MAP"/>
</dbReference>
<dbReference type="InterPro" id="IPR001131">
    <property type="entry name" value="Peptidase_M24B_aminopep-P_CS"/>
</dbReference>
<dbReference type="InterPro" id="IPR052433">
    <property type="entry name" value="X-Pro_dipept-like"/>
</dbReference>
<dbReference type="NCBIfam" id="NF008131">
    <property type="entry name" value="PRK10879.1"/>
    <property type="match status" value="1"/>
</dbReference>
<dbReference type="PANTHER" id="PTHR43226">
    <property type="entry name" value="XAA-PRO AMINOPEPTIDASE 3"/>
    <property type="match status" value="1"/>
</dbReference>
<dbReference type="PANTHER" id="PTHR43226:SF4">
    <property type="entry name" value="XAA-PRO AMINOPEPTIDASE 3"/>
    <property type="match status" value="1"/>
</dbReference>
<dbReference type="Pfam" id="PF05195">
    <property type="entry name" value="AMP_N"/>
    <property type="match status" value="1"/>
</dbReference>
<dbReference type="Pfam" id="PF00557">
    <property type="entry name" value="Peptidase_M24"/>
    <property type="match status" value="1"/>
</dbReference>
<dbReference type="PRINTS" id="PR00599">
    <property type="entry name" value="MAPEPTIDASE"/>
</dbReference>
<dbReference type="SMART" id="SM01011">
    <property type="entry name" value="AMP_N"/>
    <property type="match status" value="1"/>
</dbReference>
<dbReference type="SUPFAM" id="SSF55920">
    <property type="entry name" value="Creatinase/aminopeptidase"/>
    <property type="match status" value="1"/>
</dbReference>
<dbReference type="SUPFAM" id="SSF53092">
    <property type="entry name" value="Creatinase/prolidase N-terminal domain"/>
    <property type="match status" value="1"/>
</dbReference>
<dbReference type="PROSITE" id="PS00491">
    <property type="entry name" value="PROLINE_PEPTIDASE"/>
    <property type="match status" value="1"/>
</dbReference>
<protein>
    <recommendedName>
        <fullName>Xaa-Pro aminopeptidase</fullName>
        <ecNumber>3.4.11.9</ecNumber>
    </recommendedName>
    <alternativeName>
        <fullName>Aminoacylproline aminopeptidase</fullName>
    </alternativeName>
    <alternativeName>
        <fullName>Aminopeptidase P II</fullName>
        <shortName>APP-II</shortName>
    </alternativeName>
    <alternativeName>
        <fullName>X-Pro aminopeptidase</fullName>
    </alternativeName>
</protein>
<proteinExistence type="evidence at protein level"/>
<sequence>MSEISRQEFQRRRQALVEQMQPGSAALIFAAPEVTRSADSEYPYRQNSDFWYFTGFNEPEAVLVLIKSDDTHNHSVLFNRVRDLTAEIWFGRRLGQDAAPEKLGVDRALAFSEINQQLYQLLNGLDVVYHAQGEYAYADVIVNSALEKLRKGSRQNLTAPATMIDWRPVVHEMRLFKSPEEIAVLRRAGEITAMAHTRAMEKCRPGMFEYHLEGEIHHEFNRHGARYPSYNTIVGSGENGCILHYTENECEMRDGDLVLIDAGCEYKGYAGDITRTFPVNGKFTQAQREIYDIVLESLETSLRLYRPGTSILEVTGEVVRIMVSGLVKLGILKGDVDELIAQNAHRPFFMHGLSHWLGLDVHDVGVYGQDRSRILEPGMVLTVEPGLYIAPDAEVPEQYRGIGIRIEDDIVITETGNENLTASVVKKPEEIEALMVAARKQ</sequence>
<evidence type="ECO:0000269" key="1">
    <source>
    </source>
</evidence>
<evidence type="ECO:0000305" key="2"/>
<evidence type="ECO:0007829" key="3">
    <source>
        <dbReference type="PDB" id="2V3Z"/>
    </source>
</evidence>
<accession>P15034</accession>
<accession>Q2M9T3</accession>
<keyword id="KW-0002">3D-structure</keyword>
<keyword id="KW-0031">Aminopeptidase</keyword>
<keyword id="KW-0963">Cytoplasm</keyword>
<keyword id="KW-0903">Direct protein sequencing</keyword>
<keyword id="KW-0378">Hydrolase</keyword>
<keyword id="KW-0464">Manganese</keyword>
<keyword id="KW-0479">Metal-binding</keyword>
<keyword id="KW-0482">Metalloprotease</keyword>
<keyword id="KW-0645">Protease</keyword>
<keyword id="KW-1185">Reference proteome</keyword>
<gene>
    <name type="primary">pepP</name>
    <name type="ordered locus">b2908</name>
    <name type="ordered locus">JW2876</name>
</gene>